<name>RL29_ECOUT</name>
<comment type="similarity">
    <text evidence="1">Belongs to the universal ribosomal protein uL29 family.</text>
</comment>
<reference key="1">
    <citation type="journal article" date="2006" name="Proc. Natl. Acad. Sci. U.S.A.">
        <title>Identification of genes subject to positive selection in uropathogenic strains of Escherichia coli: a comparative genomics approach.</title>
        <authorList>
            <person name="Chen S.L."/>
            <person name="Hung C.-S."/>
            <person name="Xu J."/>
            <person name="Reigstad C.S."/>
            <person name="Magrini V."/>
            <person name="Sabo A."/>
            <person name="Blasiar D."/>
            <person name="Bieri T."/>
            <person name="Meyer R.R."/>
            <person name="Ozersky P."/>
            <person name="Armstrong J.R."/>
            <person name="Fulton R.S."/>
            <person name="Latreille J.P."/>
            <person name="Spieth J."/>
            <person name="Hooton T.M."/>
            <person name="Mardis E.R."/>
            <person name="Hultgren S.J."/>
            <person name="Gordon J.I."/>
        </authorList>
    </citation>
    <scope>NUCLEOTIDE SEQUENCE [LARGE SCALE GENOMIC DNA]</scope>
    <source>
        <strain>UTI89 / UPEC</strain>
    </source>
</reference>
<keyword id="KW-0687">Ribonucleoprotein</keyword>
<keyword id="KW-0689">Ribosomal protein</keyword>
<organism>
    <name type="scientific">Escherichia coli (strain UTI89 / UPEC)</name>
    <dbReference type="NCBI Taxonomy" id="364106"/>
    <lineage>
        <taxon>Bacteria</taxon>
        <taxon>Pseudomonadati</taxon>
        <taxon>Pseudomonadota</taxon>
        <taxon>Gammaproteobacteria</taxon>
        <taxon>Enterobacterales</taxon>
        <taxon>Enterobacteriaceae</taxon>
        <taxon>Escherichia</taxon>
    </lineage>
</organism>
<feature type="chain" id="PRO_1000007477" description="Large ribosomal subunit protein uL29">
    <location>
        <begin position="1"/>
        <end position="63"/>
    </location>
</feature>
<proteinExistence type="inferred from homology"/>
<protein>
    <recommendedName>
        <fullName evidence="1">Large ribosomal subunit protein uL29</fullName>
    </recommendedName>
    <alternativeName>
        <fullName evidence="2">50S ribosomal protein L29</fullName>
    </alternativeName>
</protein>
<gene>
    <name evidence="1" type="primary">rpmC</name>
    <name type="ordered locus">UTI89_C3762</name>
</gene>
<accession>Q1R615</accession>
<sequence length="63" mass="7273">MKAKELREKSVEELNTELLNLLREQFNLRMQAASGQLQQSHLLKQVRRDVARVKTLLNEKAGA</sequence>
<dbReference type="EMBL" id="CP000243">
    <property type="protein sequence ID" value="ABE09199.1"/>
    <property type="molecule type" value="Genomic_DNA"/>
</dbReference>
<dbReference type="RefSeq" id="WP_000644741.1">
    <property type="nucleotide sequence ID" value="NZ_CP064825.1"/>
</dbReference>
<dbReference type="SMR" id="Q1R615"/>
<dbReference type="GeneID" id="93778675"/>
<dbReference type="KEGG" id="eci:UTI89_C3762"/>
<dbReference type="HOGENOM" id="CLU_158491_1_2_6"/>
<dbReference type="Proteomes" id="UP000001952">
    <property type="component" value="Chromosome"/>
</dbReference>
<dbReference type="GO" id="GO:0022625">
    <property type="term" value="C:cytosolic large ribosomal subunit"/>
    <property type="evidence" value="ECO:0007669"/>
    <property type="project" value="TreeGrafter"/>
</dbReference>
<dbReference type="GO" id="GO:0003735">
    <property type="term" value="F:structural constituent of ribosome"/>
    <property type="evidence" value="ECO:0007669"/>
    <property type="project" value="InterPro"/>
</dbReference>
<dbReference type="GO" id="GO:0006412">
    <property type="term" value="P:translation"/>
    <property type="evidence" value="ECO:0007669"/>
    <property type="project" value="UniProtKB-UniRule"/>
</dbReference>
<dbReference type="CDD" id="cd00427">
    <property type="entry name" value="Ribosomal_L29_HIP"/>
    <property type="match status" value="1"/>
</dbReference>
<dbReference type="Gene3D" id="6.10.140.1970">
    <property type="match status" value="1"/>
</dbReference>
<dbReference type="HAMAP" id="MF_00374">
    <property type="entry name" value="Ribosomal_uL29"/>
    <property type="match status" value="1"/>
</dbReference>
<dbReference type="InterPro" id="IPR050063">
    <property type="entry name" value="Ribosomal_protein_uL29"/>
</dbReference>
<dbReference type="InterPro" id="IPR001854">
    <property type="entry name" value="Ribosomal_uL29"/>
</dbReference>
<dbReference type="InterPro" id="IPR018254">
    <property type="entry name" value="Ribosomal_uL29_CS"/>
</dbReference>
<dbReference type="InterPro" id="IPR036049">
    <property type="entry name" value="Ribosomal_uL29_sf"/>
</dbReference>
<dbReference type="NCBIfam" id="TIGR00012">
    <property type="entry name" value="L29"/>
    <property type="match status" value="1"/>
</dbReference>
<dbReference type="PANTHER" id="PTHR10916">
    <property type="entry name" value="60S RIBOSOMAL PROTEIN L35/50S RIBOSOMAL PROTEIN L29"/>
    <property type="match status" value="1"/>
</dbReference>
<dbReference type="PANTHER" id="PTHR10916:SF0">
    <property type="entry name" value="LARGE RIBOSOMAL SUBUNIT PROTEIN UL29C"/>
    <property type="match status" value="1"/>
</dbReference>
<dbReference type="Pfam" id="PF00831">
    <property type="entry name" value="Ribosomal_L29"/>
    <property type="match status" value="1"/>
</dbReference>
<dbReference type="SUPFAM" id="SSF46561">
    <property type="entry name" value="Ribosomal protein L29 (L29p)"/>
    <property type="match status" value="1"/>
</dbReference>
<dbReference type="PROSITE" id="PS00579">
    <property type="entry name" value="RIBOSOMAL_L29"/>
    <property type="match status" value="1"/>
</dbReference>
<evidence type="ECO:0000255" key="1">
    <source>
        <dbReference type="HAMAP-Rule" id="MF_00374"/>
    </source>
</evidence>
<evidence type="ECO:0000305" key="2"/>